<feature type="chain" id="PRO_0000406456" description="Transcription activator of gluconeogenesis ERT1">
    <location>
        <begin position="1"/>
        <end position="517"/>
    </location>
</feature>
<feature type="domain" description="PAS" evidence="2">
    <location>
        <begin position="371"/>
        <end position="443"/>
    </location>
</feature>
<feature type="DNA-binding region" description="Zn(2)-C6 fungal-type" evidence="3">
    <location>
        <begin position="19"/>
        <end position="47"/>
    </location>
</feature>
<feature type="region of interest" description="Disordered" evidence="4">
    <location>
        <begin position="66"/>
        <end position="103"/>
    </location>
</feature>
<feature type="region of interest" description="Disordered" evidence="4">
    <location>
        <begin position="144"/>
        <end position="166"/>
    </location>
</feature>
<keyword id="KW-0010">Activator</keyword>
<keyword id="KW-0238">DNA-binding</keyword>
<keyword id="KW-0312">Gluconeogenesis</keyword>
<keyword id="KW-0479">Metal-binding</keyword>
<keyword id="KW-0539">Nucleus</keyword>
<keyword id="KW-1185">Reference proteome</keyword>
<keyword id="KW-0804">Transcription</keyword>
<keyword id="KW-0805">Transcription regulation</keyword>
<keyword id="KW-0862">Zinc</keyword>
<gene>
    <name type="primary">ERT1</name>
    <name type="ordered locus">AFL031W</name>
</gene>
<sequence length="517" mass="58305">MMTVHRDKAAKRKKTNVACVNCSRSHVTCESQRPCTRCVKKGLEMSCVNAPRKRRKYLADVPEDQLPIPLKPADADAGPGMSERDGAAESGSKGPEHQFQDQGKIVHKPKFLSNAANLEYSTLSDIIHQDTLLNKIPVSLLYNGTDSPTPPSEALSGTHSASHGADVAGSRLSERPVHNVLNSMSSSRFVLRGLLGPQTDSILSSNVDLFKVHFPLVPQAVADGTLDFKRHSQGSMVAKKLRYDKSINQYYLSPACALPEVPNPNKHLCNGTVSFSLESRAPDEHQVLYRSDWPHSLRYGTPMEIYTLISEPFCHTSGFHSLLKYLHSRFHRHDLVEMCRSIAEFRPIFIASAVDLTEEDMIFMEQSYQRTLLEYDRFITQIGTPTCVWRRNGQISYLNDEFCLLTGWTREELLSKMTFIVELLDDNSVREYFKTFSKVAYKDFKGFEQMETCVLLSPIEGRTIECSCMWTWKRDVFGMPMMIVGHFLPVIAHPEPRDTDRLADSDFCISAGEGNPI</sequence>
<accession>Q754V2</accession>
<name>ERT1_EREGS</name>
<comment type="function">
    <text evidence="1">Transcription factor which regulates nonfermentable carbon utilization. Activator of gluconeogenetic genes (By similarity).</text>
</comment>
<comment type="subcellular location">
    <subcellularLocation>
        <location evidence="3">Nucleus</location>
    </subcellularLocation>
</comment>
<comment type="similarity">
    <text evidence="5">Belongs to the ERT1/acuK family.</text>
</comment>
<organism>
    <name type="scientific">Eremothecium gossypii (strain ATCC 10895 / CBS 109.51 / FGSC 9923 / NRRL Y-1056)</name>
    <name type="common">Yeast</name>
    <name type="synonym">Ashbya gossypii</name>
    <dbReference type="NCBI Taxonomy" id="284811"/>
    <lineage>
        <taxon>Eukaryota</taxon>
        <taxon>Fungi</taxon>
        <taxon>Dikarya</taxon>
        <taxon>Ascomycota</taxon>
        <taxon>Saccharomycotina</taxon>
        <taxon>Saccharomycetes</taxon>
        <taxon>Saccharomycetales</taxon>
        <taxon>Saccharomycetaceae</taxon>
        <taxon>Eremothecium</taxon>
    </lineage>
</organism>
<proteinExistence type="inferred from homology"/>
<dbReference type="EMBL" id="AE016819">
    <property type="protein sequence ID" value="AAS53341.2"/>
    <property type="molecule type" value="Genomic_DNA"/>
</dbReference>
<dbReference type="RefSeq" id="NP_985517.2">
    <property type="nucleotide sequence ID" value="NM_210871.2"/>
</dbReference>
<dbReference type="SMR" id="Q754V2"/>
<dbReference type="FunCoup" id="Q754V2">
    <property type="interactions" value="259"/>
</dbReference>
<dbReference type="EnsemblFungi" id="AAS53341">
    <property type="protein sequence ID" value="AAS53341"/>
    <property type="gene ID" value="AGOS_AFL031W"/>
</dbReference>
<dbReference type="GeneID" id="4621750"/>
<dbReference type="KEGG" id="ago:AGOS_AFL031W"/>
<dbReference type="eggNOG" id="ENOG502R1M5">
    <property type="taxonomic scope" value="Eukaryota"/>
</dbReference>
<dbReference type="HOGENOM" id="CLU_010748_2_3_1"/>
<dbReference type="InParanoid" id="Q754V2"/>
<dbReference type="OMA" id="VMTTCKL"/>
<dbReference type="OrthoDB" id="2538135at2759"/>
<dbReference type="Proteomes" id="UP000000591">
    <property type="component" value="Chromosome VI"/>
</dbReference>
<dbReference type="GO" id="GO:0005634">
    <property type="term" value="C:nucleus"/>
    <property type="evidence" value="ECO:0000318"/>
    <property type="project" value="GO_Central"/>
</dbReference>
<dbReference type="GO" id="GO:0003700">
    <property type="term" value="F:DNA-binding transcription factor activity"/>
    <property type="evidence" value="ECO:0000318"/>
    <property type="project" value="GO_Central"/>
</dbReference>
<dbReference type="GO" id="GO:0001227">
    <property type="term" value="F:DNA-binding transcription repressor activity, RNA polymerase II-specific"/>
    <property type="evidence" value="ECO:0007669"/>
    <property type="project" value="EnsemblFungi"/>
</dbReference>
<dbReference type="GO" id="GO:0000977">
    <property type="term" value="F:RNA polymerase II transcription regulatory region sequence-specific DNA binding"/>
    <property type="evidence" value="ECO:0000318"/>
    <property type="project" value="GO_Central"/>
</dbReference>
<dbReference type="GO" id="GO:0008270">
    <property type="term" value="F:zinc ion binding"/>
    <property type="evidence" value="ECO:0007669"/>
    <property type="project" value="InterPro"/>
</dbReference>
<dbReference type="GO" id="GO:0045991">
    <property type="term" value="P:carbon catabolite activation of transcription"/>
    <property type="evidence" value="ECO:0007669"/>
    <property type="project" value="EnsemblFungi"/>
</dbReference>
<dbReference type="GO" id="GO:0045013">
    <property type="term" value="P:carbon catabolite repression of transcription"/>
    <property type="evidence" value="ECO:0007669"/>
    <property type="project" value="EnsemblFungi"/>
</dbReference>
<dbReference type="GO" id="GO:0009267">
    <property type="term" value="P:cellular response to starvation"/>
    <property type="evidence" value="ECO:0000318"/>
    <property type="project" value="GO_Central"/>
</dbReference>
<dbReference type="GO" id="GO:0006094">
    <property type="term" value="P:gluconeogenesis"/>
    <property type="evidence" value="ECO:0007669"/>
    <property type="project" value="UniProtKB-KW"/>
</dbReference>
<dbReference type="GO" id="GO:0045722">
    <property type="term" value="P:positive regulation of gluconeogenesis"/>
    <property type="evidence" value="ECO:0007669"/>
    <property type="project" value="EnsemblFungi"/>
</dbReference>
<dbReference type="GO" id="GO:0045944">
    <property type="term" value="P:positive regulation of transcription by RNA polymerase II"/>
    <property type="evidence" value="ECO:0007669"/>
    <property type="project" value="EnsemblFungi"/>
</dbReference>
<dbReference type="CDD" id="cd00067">
    <property type="entry name" value="GAL4"/>
    <property type="match status" value="1"/>
</dbReference>
<dbReference type="CDD" id="cd00130">
    <property type="entry name" value="PAS"/>
    <property type="match status" value="1"/>
</dbReference>
<dbReference type="Gene3D" id="3.30.450.20">
    <property type="entry name" value="PAS domain"/>
    <property type="match status" value="1"/>
</dbReference>
<dbReference type="Gene3D" id="4.10.240.10">
    <property type="entry name" value="Zn(2)-C6 fungal-type DNA-binding domain"/>
    <property type="match status" value="1"/>
</dbReference>
<dbReference type="InterPro" id="IPR050335">
    <property type="entry name" value="ERT1_acuK_gluconeogen_tf"/>
</dbReference>
<dbReference type="InterPro" id="IPR000014">
    <property type="entry name" value="PAS"/>
</dbReference>
<dbReference type="InterPro" id="IPR035965">
    <property type="entry name" value="PAS-like_dom_sf"/>
</dbReference>
<dbReference type="InterPro" id="IPR056751">
    <property type="entry name" value="PAS_13"/>
</dbReference>
<dbReference type="InterPro" id="IPR036864">
    <property type="entry name" value="Zn2-C6_fun-type_DNA-bd_sf"/>
</dbReference>
<dbReference type="InterPro" id="IPR001138">
    <property type="entry name" value="Zn2Cys6_DnaBD"/>
</dbReference>
<dbReference type="NCBIfam" id="TIGR00229">
    <property type="entry name" value="sensory_box"/>
    <property type="match status" value="1"/>
</dbReference>
<dbReference type="PANTHER" id="PTHR47659:SF1">
    <property type="entry name" value="TRANSCRIPTION ACTIVATOR OF GLUCONEOGENESIS ERT1"/>
    <property type="match status" value="1"/>
</dbReference>
<dbReference type="PANTHER" id="PTHR47659">
    <property type="entry name" value="ZN(II)2CYS6 TRANSCRIPTION FACTOR (EUROFUNG)-RELATED"/>
    <property type="match status" value="1"/>
</dbReference>
<dbReference type="Pfam" id="PF24990">
    <property type="entry name" value="PAS_13"/>
    <property type="match status" value="2"/>
</dbReference>
<dbReference type="Pfam" id="PF00172">
    <property type="entry name" value="Zn_clus"/>
    <property type="match status" value="1"/>
</dbReference>
<dbReference type="SMART" id="SM00066">
    <property type="entry name" value="GAL4"/>
    <property type="match status" value="1"/>
</dbReference>
<dbReference type="SMART" id="SM00091">
    <property type="entry name" value="PAS"/>
    <property type="match status" value="1"/>
</dbReference>
<dbReference type="SUPFAM" id="SSF55785">
    <property type="entry name" value="PYP-like sensor domain (PAS domain)"/>
    <property type="match status" value="1"/>
</dbReference>
<dbReference type="SUPFAM" id="SSF57701">
    <property type="entry name" value="Zn2/Cys6 DNA-binding domain"/>
    <property type="match status" value="1"/>
</dbReference>
<dbReference type="PROSITE" id="PS50112">
    <property type="entry name" value="PAS"/>
    <property type="match status" value="1"/>
</dbReference>
<dbReference type="PROSITE" id="PS00463">
    <property type="entry name" value="ZN2_CY6_FUNGAL_1"/>
    <property type="match status" value="1"/>
</dbReference>
<dbReference type="PROSITE" id="PS50048">
    <property type="entry name" value="ZN2_CY6_FUNGAL_2"/>
    <property type="match status" value="1"/>
</dbReference>
<protein>
    <recommendedName>
        <fullName>Transcription activator of gluconeogenesis ERT1</fullName>
    </recommendedName>
</protein>
<evidence type="ECO:0000250" key="1"/>
<evidence type="ECO:0000255" key="2">
    <source>
        <dbReference type="PROSITE-ProRule" id="PRU00140"/>
    </source>
</evidence>
<evidence type="ECO:0000255" key="3">
    <source>
        <dbReference type="PROSITE-ProRule" id="PRU00227"/>
    </source>
</evidence>
<evidence type="ECO:0000256" key="4">
    <source>
        <dbReference type="SAM" id="MobiDB-lite"/>
    </source>
</evidence>
<evidence type="ECO:0000305" key="5"/>
<reference key="1">
    <citation type="journal article" date="2004" name="Science">
        <title>The Ashbya gossypii genome as a tool for mapping the ancient Saccharomyces cerevisiae genome.</title>
        <authorList>
            <person name="Dietrich F.S."/>
            <person name="Voegeli S."/>
            <person name="Brachat S."/>
            <person name="Lerch A."/>
            <person name="Gates K."/>
            <person name="Steiner S."/>
            <person name="Mohr C."/>
            <person name="Poehlmann R."/>
            <person name="Luedi P."/>
            <person name="Choi S."/>
            <person name="Wing R.A."/>
            <person name="Flavier A."/>
            <person name="Gaffney T.D."/>
            <person name="Philippsen P."/>
        </authorList>
    </citation>
    <scope>NUCLEOTIDE SEQUENCE [LARGE SCALE GENOMIC DNA]</scope>
    <source>
        <strain>ATCC 10895 / CBS 109.51 / FGSC 9923 / NRRL Y-1056</strain>
    </source>
</reference>
<reference key="2">
    <citation type="journal article" date="2013" name="G3 (Bethesda)">
        <title>Genomes of Ashbya fungi isolated from insects reveal four mating-type loci, numerous translocations, lack of transposons, and distinct gene duplications.</title>
        <authorList>
            <person name="Dietrich F.S."/>
            <person name="Voegeli S."/>
            <person name="Kuo S."/>
            <person name="Philippsen P."/>
        </authorList>
    </citation>
    <scope>GENOME REANNOTATION</scope>
    <source>
        <strain>ATCC 10895 / CBS 109.51 / FGSC 9923 / NRRL Y-1056</strain>
    </source>
</reference>